<name>YCIC_ECOHS</name>
<proteinExistence type="inferred from homology"/>
<gene>
    <name evidence="1" type="primary">yciC</name>
    <name type="ordered locus">EcHS_A1364</name>
</gene>
<organism>
    <name type="scientific">Escherichia coli O9:H4 (strain HS)</name>
    <dbReference type="NCBI Taxonomy" id="331112"/>
    <lineage>
        <taxon>Bacteria</taxon>
        <taxon>Pseudomonadati</taxon>
        <taxon>Pseudomonadota</taxon>
        <taxon>Gammaproteobacteria</taxon>
        <taxon>Enterobacterales</taxon>
        <taxon>Enterobacteriaceae</taxon>
        <taxon>Escherichia</taxon>
    </lineage>
</organism>
<sequence length="247" mass="26433">MSITAQSVYRDTGNFFRNQFMTILLVSLLCAFITVVLGHVFSPSDAQLAQLNDGVPVSGSSGLFDLVQNMSPEQQQILLQASAASTFSGLIGNAILAGGVILIIQLVSAGQRVSALRAIGASAPILPKLFILIFLTTLLVQIGIMLVVVPGIIMAILLALAPVMLVQDKMGIFASMRSSMRLTWANMRLVAPAVLSWLLAKTLLLLFASSFAALTPEIGAVLANTLSNLISAILLIYLFRLYMLIRQ</sequence>
<evidence type="ECO:0000255" key="1">
    <source>
        <dbReference type="HAMAP-Rule" id="MF_01067"/>
    </source>
</evidence>
<accession>A7ZZJ1</accession>
<reference key="1">
    <citation type="journal article" date="2008" name="J. Bacteriol.">
        <title>The pangenome structure of Escherichia coli: comparative genomic analysis of E. coli commensal and pathogenic isolates.</title>
        <authorList>
            <person name="Rasko D.A."/>
            <person name="Rosovitz M.J."/>
            <person name="Myers G.S.A."/>
            <person name="Mongodin E.F."/>
            <person name="Fricke W.F."/>
            <person name="Gajer P."/>
            <person name="Crabtree J."/>
            <person name="Sebaihia M."/>
            <person name="Thomson N.R."/>
            <person name="Chaudhuri R."/>
            <person name="Henderson I.R."/>
            <person name="Sperandio V."/>
            <person name="Ravel J."/>
        </authorList>
    </citation>
    <scope>NUCLEOTIDE SEQUENCE [LARGE SCALE GENOMIC DNA]</scope>
    <source>
        <strain>HS</strain>
    </source>
</reference>
<keyword id="KW-0997">Cell inner membrane</keyword>
<keyword id="KW-1003">Cell membrane</keyword>
<keyword id="KW-0472">Membrane</keyword>
<keyword id="KW-0812">Transmembrane</keyword>
<keyword id="KW-1133">Transmembrane helix</keyword>
<feature type="chain" id="PRO_1000064521" description="UPF0259 membrane protein YciC">
    <location>
        <begin position="1"/>
        <end position="247"/>
    </location>
</feature>
<feature type="transmembrane region" description="Helical" evidence="1">
    <location>
        <begin position="20"/>
        <end position="40"/>
    </location>
</feature>
<feature type="transmembrane region" description="Helical" evidence="1">
    <location>
        <begin position="87"/>
        <end position="107"/>
    </location>
</feature>
<feature type="transmembrane region" description="Helical" evidence="1">
    <location>
        <begin position="118"/>
        <end position="140"/>
    </location>
</feature>
<feature type="transmembrane region" description="Helical" evidence="1">
    <location>
        <begin position="152"/>
        <end position="172"/>
    </location>
</feature>
<feature type="transmembrane region" description="Helical" evidence="1">
    <location>
        <begin position="187"/>
        <end position="209"/>
    </location>
</feature>
<feature type="transmembrane region" description="Helical" evidence="1">
    <location>
        <begin position="225"/>
        <end position="245"/>
    </location>
</feature>
<protein>
    <recommendedName>
        <fullName evidence="1">UPF0259 membrane protein YciC</fullName>
    </recommendedName>
</protein>
<comment type="subcellular location">
    <subcellularLocation>
        <location evidence="1">Cell inner membrane</location>
        <topology evidence="1">Multi-pass membrane protein</topology>
    </subcellularLocation>
</comment>
<comment type="similarity">
    <text evidence="1">Belongs to the UPF0259 family.</text>
</comment>
<dbReference type="EMBL" id="CP000802">
    <property type="protein sequence ID" value="ABV05695.1"/>
    <property type="molecule type" value="Genomic_DNA"/>
</dbReference>
<dbReference type="RefSeq" id="WP_000028540.1">
    <property type="nucleotide sequence ID" value="NC_009800.1"/>
</dbReference>
<dbReference type="KEGG" id="ecx:EcHS_A1364"/>
<dbReference type="HOGENOM" id="CLU_073287_0_0_6"/>
<dbReference type="GO" id="GO:0005886">
    <property type="term" value="C:plasma membrane"/>
    <property type="evidence" value="ECO:0007669"/>
    <property type="project" value="UniProtKB-SubCell"/>
</dbReference>
<dbReference type="HAMAP" id="MF_01067">
    <property type="entry name" value="UPF0259"/>
    <property type="match status" value="1"/>
</dbReference>
<dbReference type="InterPro" id="IPR009627">
    <property type="entry name" value="UPF0259"/>
</dbReference>
<dbReference type="NCBIfam" id="NF002774">
    <property type="entry name" value="PRK02868.1"/>
    <property type="match status" value="1"/>
</dbReference>
<dbReference type="Pfam" id="PF06790">
    <property type="entry name" value="UPF0259"/>
    <property type="match status" value="1"/>
</dbReference>